<reference key="1">
    <citation type="journal article" date="1986" name="Plant Mol. Biol.">
        <title>Developmental biochemistry of cottonseed embryogenesis and germination. XVIII. cDNA and amino acid sequences of the members of the storage protein families.</title>
        <authorList>
            <person name="Chlan C.A."/>
            <person name="Pyle J.B."/>
            <person name="Legocki A.B."/>
            <person name="Dure L. III"/>
        </authorList>
        <dbReference type="AGRICOLA" id="IND87019922"/>
    </citation>
    <scope>NUCLEOTIDE SEQUENCE [MRNA]</scope>
</reference>
<organism>
    <name type="scientific">Gossypium hirsutum</name>
    <name type="common">Upland cotton</name>
    <name type="synonym">Gossypium mexicanum</name>
    <dbReference type="NCBI Taxonomy" id="3635"/>
    <lineage>
        <taxon>Eukaryota</taxon>
        <taxon>Viridiplantae</taxon>
        <taxon>Streptophyta</taxon>
        <taxon>Embryophyta</taxon>
        <taxon>Tracheophyta</taxon>
        <taxon>Spermatophyta</taxon>
        <taxon>Magnoliopsida</taxon>
        <taxon>eudicotyledons</taxon>
        <taxon>Gunneridae</taxon>
        <taxon>Pentapetalae</taxon>
        <taxon>rosids</taxon>
        <taxon>malvids</taxon>
        <taxon>Malvales</taxon>
        <taxon>Malvaceae</taxon>
        <taxon>Malvoideae</taxon>
        <taxon>Gossypium</taxon>
    </lineage>
</organism>
<sequence length="588" mass="69729">MVRNKSACVVLLFSLFLSFGLLCSAKDFPGRRGDDDPPKRYEDCRRRCEWDTRGQKEQQQCEESCKSQYGEKDQQQRHRPEDPQRRYEECQQECRQQEERQRPQCQQRCLKRFEQEQQQSQRQFQECQQHCHQQEQRPERKQQCVRECRERYQENPWRREREEEAEEEETEEGEQEQSHNPFHFHRRSFQSRFREEHGNFRVLQRFASRHPILRGINEFRLSILEANPNTFVLPHHCDAEKIYLVTNGRGTLTFLTHENKESYNVVPGVVVRVPAGSTVYLANQDNKEKLIIAVLHRPVNNPRQFEEFFPAGSQRPQSYLRAFSREILEPAFNTRSEQLDELFGGRQSHRRQQGQGMFRKASQEQIRALSQEATSPREKSGERFAFNLLYRTPRYSNQNGRFYEACPREFRQLSDINVTVSALQLNQGSIFVPHYNSKATFVVLVNEGNGYVEMVSPHLPRQSSFEEEEEQQQEQEQEEERRSGQYRKIRSQLSRGDIFVVPANFPVTFVASQNQNLRMTGFGLYNQNINPDHNQRIFVAGKINHVRQWDSQAKELAFGVSSRLVDEIFNNNPQESYFVSRQRQRASE</sequence>
<dbReference type="EMBL" id="M16891">
    <property type="protein sequence ID" value="AAA33071.1"/>
    <property type="molecule type" value="mRNA"/>
</dbReference>
<dbReference type="PIR" id="A30838">
    <property type="entry name" value="FWCNAB"/>
</dbReference>
<dbReference type="PIR" id="S08059">
    <property type="entry name" value="S08059"/>
</dbReference>
<dbReference type="SMR" id="P09801"/>
<dbReference type="STRING" id="3635.P09801"/>
<dbReference type="Allergome" id="6161">
    <property type="allergen name" value="Gos h Vicilin"/>
</dbReference>
<dbReference type="PaxDb" id="3635-P09801"/>
<dbReference type="Proteomes" id="UP000189702">
    <property type="component" value="Unplaced"/>
</dbReference>
<dbReference type="GO" id="GO:0033095">
    <property type="term" value="C:aleurone grain"/>
    <property type="evidence" value="ECO:0007669"/>
    <property type="project" value="UniProtKB-SubCell"/>
</dbReference>
<dbReference type="GO" id="GO:0005773">
    <property type="term" value="C:vacuole"/>
    <property type="evidence" value="ECO:0007669"/>
    <property type="project" value="UniProtKB-SubCell"/>
</dbReference>
<dbReference type="GO" id="GO:0045735">
    <property type="term" value="F:nutrient reservoir activity"/>
    <property type="evidence" value="ECO:0007669"/>
    <property type="project" value="UniProtKB-KW"/>
</dbReference>
<dbReference type="CDD" id="cd02245">
    <property type="entry name" value="cupin_7S_vicilin-like_C"/>
    <property type="match status" value="1"/>
</dbReference>
<dbReference type="CDD" id="cd02244">
    <property type="entry name" value="cupin_7S_vicilin-like_N"/>
    <property type="match status" value="1"/>
</dbReference>
<dbReference type="Gene3D" id="6.10.250.890">
    <property type="match status" value="1"/>
</dbReference>
<dbReference type="Gene3D" id="2.60.120.10">
    <property type="entry name" value="Jelly Rolls"/>
    <property type="match status" value="2"/>
</dbReference>
<dbReference type="InterPro" id="IPR006045">
    <property type="entry name" value="Cupin_1"/>
</dbReference>
<dbReference type="InterPro" id="IPR014710">
    <property type="entry name" value="RmlC-like_jellyroll"/>
</dbReference>
<dbReference type="InterPro" id="IPR011051">
    <property type="entry name" value="RmlC_Cupin_sf"/>
</dbReference>
<dbReference type="InterPro" id="IPR050253">
    <property type="entry name" value="Seed_Storage-Functional"/>
</dbReference>
<dbReference type="InterPro" id="IPR006792">
    <property type="entry name" value="Vicilin_N"/>
</dbReference>
<dbReference type="PANTHER" id="PTHR31189">
    <property type="entry name" value="OS03G0336100 PROTEIN-RELATED"/>
    <property type="match status" value="1"/>
</dbReference>
<dbReference type="PANTHER" id="PTHR31189:SF41">
    <property type="entry name" value="VICILIN C72"/>
    <property type="match status" value="1"/>
</dbReference>
<dbReference type="Pfam" id="PF00190">
    <property type="entry name" value="Cupin_1"/>
    <property type="match status" value="2"/>
</dbReference>
<dbReference type="Pfam" id="PF04702">
    <property type="entry name" value="Vicilin_N"/>
    <property type="match status" value="1"/>
</dbReference>
<dbReference type="SMART" id="SM00835">
    <property type="entry name" value="Cupin_1"/>
    <property type="match status" value="2"/>
</dbReference>
<dbReference type="SUPFAM" id="SSF51182">
    <property type="entry name" value="RmlC-like cupins"/>
    <property type="match status" value="1"/>
</dbReference>
<name>VCLB_GOSHI</name>
<feature type="signal peptide">
    <location>
        <begin position="1"/>
        <end position="25"/>
    </location>
</feature>
<feature type="chain" id="PRO_0000032177" description="Vicilin C72">
    <location>
        <begin position="26"/>
        <end position="588"/>
    </location>
</feature>
<feature type="domain" description="Cupin type-1 1" evidence="1">
    <location>
        <begin position="182"/>
        <end position="340"/>
    </location>
</feature>
<feature type="domain" description="Cupin type-1 2" evidence="1">
    <location>
        <begin position="386"/>
        <end position="566"/>
    </location>
</feature>
<feature type="region of interest" description="Disordered" evidence="2">
    <location>
        <begin position="159"/>
        <end position="183"/>
    </location>
</feature>
<feature type="region of interest" description="Disordered" evidence="2">
    <location>
        <begin position="460"/>
        <end position="487"/>
    </location>
</feature>
<feature type="compositionally biased region" description="Acidic residues" evidence="2">
    <location>
        <begin position="163"/>
        <end position="175"/>
    </location>
</feature>
<feature type="compositionally biased region" description="Acidic residues" evidence="2">
    <location>
        <begin position="465"/>
        <end position="478"/>
    </location>
</feature>
<protein>
    <recommendedName>
        <fullName>Vicilin C72</fullName>
    </recommendedName>
    <alternativeName>
        <fullName>Alpha-globulin B</fullName>
    </alternativeName>
</protein>
<proteinExistence type="evidence at transcript level"/>
<keyword id="KW-1185">Reference proteome</keyword>
<keyword id="KW-0708">Seed storage protein</keyword>
<keyword id="KW-0732">Signal</keyword>
<keyword id="KW-0758">Storage protein</keyword>
<keyword id="KW-0926">Vacuole</keyword>
<evidence type="ECO:0000255" key="1"/>
<evidence type="ECO:0000256" key="2">
    <source>
        <dbReference type="SAM" id="MobiDB-lite"/>
    </source>
</evidence>
<evidence type="ECO:0000305" key="3"/>
<accession>P09801</accession>
<comment type="function">
    <text>Seed storage protein.</text>
</comment>
<comment type="subcellular location">
    <subcellularLocation>
        <location>Vacuole</location>
        <location>Aleurone grain</location>
    </subcellularLocation>
    <subcellularLocation>
        <location>Vacuole</location>
    </subcellularLocation>
    <text>Cotyledonary membrane-bound vacuolar protein bodies.</text>
</comment>
<comment type="similarity">
    <text evidence="3">Belongs to the 7S seed storage protein family.</text>
</comment>